<evidence type="ECO:0000250" key="1"/>
<evidence type="ECO:0000255" key="2">
    <source>
        <dbReference type="PROSITE-ProRule" id="PRU00417"/>
    </source>
</evidence>
<evidence type="ECO:0000255" key="3">
    <source>
        <dbReference type="PROSITE-ProRule" id="PRU00422"/>
    </source>
</evidence>
<evidence type="ECO:0000255" key="4">
    <source>
        <dbReference type="PROSITE-ProRule" id="PRU00427"/>
    </source>
</evidence>
<evidence type="ECO:0000269" key="5">
    <source>
    </source>
</evidence>
<evidence type="ECO:0000269" key="6">
    <source>
    </source>
</evidence>
<evidence type="ECO:0000269" key="7">
    <source>
    </source>
</evidence>
<evidence type="ECO:0007829" key="8">
    <source>
        <dbReference type="PDB" id="2R48"/>
    </source>
</evidence>
<dbReference type="EC" id="2.7.1.191"/>
<dbReference type="EMBL" id="AL009126">
    <property type="protein sequence ID" value="CAB13058.2"/>
    <property type="molecule type" value="Genomic_DNA"/>
</dbReference>
<dbReference type="PIR" id="G69848">
    <property type="entry name" value="G69848"/>
</dbReference>
<dbReference type="RefSeq" id="NP_389083.2">
    <property type="nucleotide sequence ID" value="NC_000964.3"/>
</dbReference>
<dbReference type="RefSeq" id="WP_003245781.1">
    <property type="nucleotide sequence ID" value="NZ_OZ025638.1"/>
</dbReference>
<dbReference type="PDB" id="2R48">
    <property type="method" value="X-ray"/>
    <property type="resolution" value="1.80 A"/>
    <property type="chains" value="A=2-104"/>
</dbReference>
<dbReference type="PDBsum" id="2R48"/>
<dbReference type="SMR" id="O31645"/>
<dbReference type="FunCoup" id="O31645">
    <property type="interactions" value="49"/>
</dbReference>
<dbReference type="STRING" id="224308.BSU12010"/>
<dbReference type="TCDB" id="4.A.2.1.6">
    <property type="family name" value="the pts fructose-mannitol (fru) family"/>
</dbReference>
<dbReference type="iPTMnet" id="O31645"/>
<dbReference type="jPOST" id="O31645"/>
<dbReference type="PaxDb" id="224308-BSU12010"/>
<dbReference type="EnsemblBacteria" id="CAB13058">
    <property type="protein sequence ID" value="CAB13058"/>
    <property type="gene ID" value="BSU_12010"/>
</dbReference>
<dbReference type="GeneID" id="936437"/>
<dbReference type="KEGG" id="bsu:BSU12010"/>
<dbReference type="PATRIC" id="fig|224308.179.peg.1296"/>
<dbReference type="eggNOG" id="COG1299">
    <property type="taxonomic scope" value="Bacteria"/>
</dbReference>
<dbReference type="eggNOG" id="COG1445">
    <property type="taxonomic scope" value="Bacteria"/>
</dbReference>
<dbReference type="eggNOG" id="COG1762">
    <property type="taxonomic scope" value="Bacteria"/>
</dbReference>
<dbReference type="InParanoid" id="O31645"/>
<dbReference type="OrthoDB" id="9782569at2"/>
<dbReference type="PhylomeDB" id="O31645"/>
<dbReference type="BioCyc" id="BSUB:BSU12010-MONOMER"/>
<dbReference type="BRENDA" id="2.7.1.191">
    <property type="organism ID" value="658"/>
</dbReference>
<dbReference type="EvolutionaryTrace" id="O31645"/>
<dbReference type="Proteomes" id="UP000001570">
    <property type="component" value="Chromosome"/>
</dbReference>
<dbReference type="GO" id="GO:0005886">
    <property type="term" value="C:plasma membrane"/>
    <property type="evidence" value="ECO:0000318"/>
    <property type="project" value="GO_Central"/>
</dbReference>
<dbReference type="GO" id="GO:0005351">
    <property type="term" value="F:carbohydrate:proton symporter activity"/>
    <property type="evidence" value="ECO:0007669"/>
    <property type="project" value="InterPro"/>
</dbReference>
<dbReference type="GO" id="GO:0016301">
    <property type="term" value="F:kinase activity"/>
    <property type="evidence" value="ECO:0007669"/>
    <property type="project" value="UniProtKB-KW"/>
</dbReference>
<dbReference type="GO" id="GO:0022877">
    <property type="term" value="F:protein-N(PI)-phosphohistidine-fructose phosphotransferase system transporter activity"/>
    <property type="evidence" value="ECO:0007669"/>
    <property type="project" value="InterPro"/>
</dbReference>
<dbReference type="GO" id="GO:0090563">
    <property type="term" value="F:protein-phosphocysteine-sugar phosphotransferase activity"/>
    <property type="evidence" value="ECO:0000318"/>
    <property type="project" value="GO_Central"/>
</dbReference>
<dbReference type="GO" id="GO:0009401">
    <property type="term" value="P:phosphoenolpyruvate-dependent sugar phosphotransferase system"/>
    <property type="evidence" value="ECO:0000318"/>
    <property type="project" value="GO_Central"/>
</dbReference>
<dbReference type="CDD" id="cd00211">
    <property type="entry name" value="PTS_IIA_fru"/>
    <property type="match status" value="1"/>
</dbReference>
<dbReference type="CDD" id="cd05569">
    <property type="entry name" value="PTS_IIB_fructose"/>
    <property type="match status" value="1"/>
</dbReference>
<dbReference type="FunFam" id="3.40.50.2300:FF:000014">
    <property type="entry name" value="PTS system fructose-like transporter subunit IIB"/>
    <property type="match status" value="1"/>
</dbReference>
<dbReference type="FunFam" id="3.40.930.10:FF:000009">
    <property type="entry name" value="PTS system, fructose specific IIABC component"/>
    <property type="match status" value="1"/>
</dbReference>
<dbReference type="Gene3D" id="3.40.50.2300">
    <property type="match status" value="1"/>
</dbReference>
<dbReference type="Gene3D" id="3.40.930.10">
    <property type="entry name" value="Mannitol-specific EII, Chain A"/>
    <property type="match status" value="1"/>
</dbReference>
<dbReference type="InterPro" id="IPR050864">
    <property type="entry name" value="Bacterial_PTS_Sugar_Transport"/>
</dbReference>
<dbReference type="InterPro" id="IPR016152">
    <property type="entry name" value="PTrfase/Anion_transptr"/>
</dbReference>
<dbReference type="InterPro" id="IPR002178">
    <property type="entry name" value="PTS_EIIA_type-2_dom"/>
</dbReference>
<dbReference type="InterPro" id="IPR036095">
    <property type="entry name" value="PTS_EIIB-like_sf"/>
</dbReference>
<dbReference type="InterPro" id="IPR013011">
    <property type="entry name" value="PTS_EIIB_2"/>
</dbReference>
<dbReference type="InterPro" id="IPR003501">
    <property type="entry name" value="PTS_EIIB_2/3"/>
</dbReference>
<dbReference type="InterPro" id="IPR003352">
    <property type="entry name" value="PTS_EIIC"/>
</dbReference>
<dbReference type="InterPro" id="IPR013014">
    <property type="entry name" value="PTS_EIIC_2"/>
</dbReference>
<dbReference type="InterPro" id="IPR004715">
    <property type="entry name" value="PTS_IIA_fruc"/>
</dbReference>
<dbReference type="InterPro" id="IPR003353">
    <property type="entry name" value="PTS_IIB_fruc"/>
</dbReference>
<dbReference type="InterPro" id="IPR006327">
    <property type="entry name" value="PTS_IIC_fruc"/>
</dbReference>
<dbReference type="NCBIfam" id="TIGR00829">
    <property type="entry name" value="FRU"/>
    <property type="match status" value="1"/>
</dbReference>
<dbReference type="NCBIfam" id="TIGR00848">
    <property type="entry name" value="fruA"/>
    <property type="match status" value="1"/>
</dbReference>
<dbReference type="NCBIfam" id="TIGR01427">
    <property type="entry name" value="PTS_IIC_fructo"/>
    <property type="match status" value="1"/>
</dbReference>
<dbReference type="PANTHER" id="PTHR30505">
    <property type="entry name" value="FRUCTOSE-LIKE PERMEASE"/>
    <property type="match status" value="1"/>
</dbReference>
<dbReference type="PANTHER" id="PTHR30505:SF0">
    <property type="entry name" value="FRUCTOSE-LIKE PTS SYSTEM EIIBC COMPONENT-RELATED"/>
    <property type="match status" value="1"/>
</dbReference>
<dbReference type="Pfam" id="PF00359">
    <property type="entry name" value="PTS_EIIA_2"/>
    <property type="match status" value="1"/>
</dbReference>
<dbReference type="Pfam" id="PF02378">
    <property type="entry name" value="PTS_EIIC"/>
    <property type="match status" value="1"/>
</dbReference>
<dbReference type="Pfam" id="PF02302">
    <property type="entry name" value="PTS_IIB"/>
    <property type="match status" value="1"/>
</dbReference>
<dbReference type="SUPFAM" id="SSF55804">
    <property type="entry name" value="Phoshotransferase/anion transport protein"/>
    <property type="match status" value="1"/>
</dbReference>
<dbReference type="SUPFAM" id="SSF52794">
    <property type="entry name" value="PTS system IIB component-like"/>
    <property type="match status" value="1"/>
</dbReference>
<dbReference type="PROSITE" id="PS51094">
    <property type="entry name" value="PTS_EIIA_TYPE_2"/>
    <property type="match status" value="1"/>
</dbReference>
<dbReference type="PROSITE" id="PS00372">
    <property type="entry name" value="PTS_EIIA_TYPE_2_HIS"/>
    <property type="match status" value="1"/>
</dbReference>
<dbReference type="PROSITE" id="PS51099">
    <property type="entry name" value="PTS_EIIB_TYPE_2"/>
    <property type="match status" value="1"/>
</dbReference>
<dbReference type="PROSITE" id="PS51104">
    <property type="entry name" value="PTS_EIIC_TYPE_2"/>
    <property type="match status" value="1"/>
</dbReference>
<organism>
    <name type="scientific">Bacillus subtilis (strain 168)</name>
    <dbReference type="NCBI Taxonomy" id="224308"/>
    <lineage>
        <taxon>Bacteria</taxon>
        <taxon>Bacillati</taxon>
        <taxon>Bacillota</taxon>
        <taxon>Bacilli</taxon>
        <taxon>Bacillales</taxon>
        <taxon>Bacillaceae</taxon>
        <taxon>Bacillus</taxon>
    </lineage>
</organism>
<accession>O31645</accession>
<feature type="chain" id="PRO_0000371313" description="PTS system mannose-specific EIIBCA component">
    <location>
        <begin position="1"/>
        <end position="650"/>
    </location>
</feature>
<feature type="transmembrane region" description="Helical" evidence="4">
    <location>
        <begin position="133"/>
        <end position="153"/>
    </location>
</feature>
<feature type="transmembrane region" description="Helical" evidence="4">
    <location>
        <begin position="174"/>
        <end position="194"/>
    </location>
</feature>
<feature type="transmembrane region" description="Helical" evidence="4">
    <location>
        <begin position="199"/>
        <end position="219"/>
    </location>
</feature>
<feature type="transmembrane region" description="Helical" evidence="4">
    <location>
        <begin position="221"/>
        <end position="241"/>
    </location>
</feature>
<feature type="transmembrane region" description="Helical" evidence="4">
    <location>
        <begin position="256"/>
        <end position="276"/>
    </location>
</feature>
<feature type="transmembrane region" description="Helical" evidence="4">
    <location>
        <begin position="297"/>
        <end position="317"/>
    </location>
</feature>
<feature type="transmembrane region" description="Helical" evidence="4">
    <location>
        <begin position="336"/>
        <end position="356"/>
    </location>
</feature>
<feature type="transmembrane region" description="Helical" evidence="4">
    <location>
        <begin position="369"/>
        <end position="389"/>
    </location>
</feature>
<feature type="transmembrane region" description="Helical" evidence="4">
    <location>
        <begin position="396"/>
        <end position="416"/>
    </location>
</feature>
<feature type="transmembrane region" description="Helical" evidence="4">
    <location>
        <begin position="436"/>
        <end position="456"/>
    </location>
</feature>
<feature type="domain" description="PTS EIIB type-2" evidence="3">
    <location>
        <begin position="1"/>
        <end position="98"/>
    </location>
</feature>
<feature type="domain" description="PTS EIIC type-2" evidence="4">
    <location>
        <begin position="123"/>
        <end position="456"/>
    </location>
</feature>
<feature type="domain" description="PTS EIIA type-2" evidence="2">
    <location>
        <begin position="504"/>
        <end position="649"/>
    </location>
</feature>
<feature type="active site" description="Phosphocysteine intermediate; for EIIB activity" evidence="1">
    <location>
        <position position="9"/>
    </location>
</feature>
<feature type="active site" description="Tele-phosphohistidine intermediate; for EIIA activity" evidence="2">
    <location>
        <position position="566"/>
    </location>
</feature>
<feature type="modified residue" description="Phosphoserine" evidence="6">
    <location>
        <position position="365"/>
    </location>
</feature>
<feature type="mutagenesis site" description="Appears to be unable to inactivate ManR, since ManR does not show any decrease in its DNA-binding activity in the presence of this mutant." evidence="7">
    <original>C</original>
    <variation>A</variation>
    <location>
        <position position="9"/>
    </location>
</feature>
<feature type="strand" evidence="8">
    <location>
        <begin position="2"/>
        <end position="8"/>
    </location>
</feature>
<feature type="helix" evidence="8">
    <location>
        <begin position="14"/>
        <end position="30"/>
    </location>
</feature>
<feature type="strand" evidence="8">
    <location>
        <begin position="33"/>
        <end position="40"/>
    </location>
</feature>
<feature type="strand" evidence="8">
    <location>
        <begin position="43"/>
        <end position="46"/>
    </location>
</feature>
<feature type="helix" evidence="8">
    <location>
        <begin position="50"/>
        <end position="55"/>
    </location>
</feature>
<feature type="strand" evidence="8">
    <location>
        <begin position="57"/>
        <end position="65"/>
    </location>
</feature>
<feature type="helix" evidence="8">
    <location>
        <begin position="70"/>
        <end position="72"/>
    </location>
</feature>
<feature type="strand" evidence="8">
    <location>
        <begin position="75"/>
        <end position="80"/>
    </location>
</feature>
<feature type="helix" evidence="8">
    <location>
        <begin position="82"/>
        <end position="87"/>
    </location>
</feature>
<feature type="helix" evidence="8">
    <location>
        <begin position="89"/>
        <end position="98"/>
    </location>
</feature>
<protein>
    <recommendedName>
        <fullName>PTS system mannose-specific EIIBCA component</fullName>
    </recommendedName>
    <alternativeName>
        <fullName>EIIBCA-Man</fullName>
        <shortName>EII-Man</shortName>
    </alternativeName>
    <domain>
        <recommendedName>
            <fullName>Mannose-specific phosphotransferase enzyme IIB component</fullName>
            <ecNumber>2.7.1.191</ecNumber>
        </recommendedName>
        <alternativeName>
            <fullName>PTS system mannose-specific EIIB component</fullName>
        </alternativeName>
    </domain>
    <domain>
        <recommendedName>
            <fullName>Mannose permease IIC component</fullName>
        </recommendedName>
        <alternativeName>
            <fullName>PTS system mannose-specific EIIC component</fullName>
        </alternativeName>
    </domain>
    <domain>
        <recommendedName>
            <fullName>Mannose-specific phosphotransferase enzyme IIA component</fullName>
        </recommendedName>
        <alternativeName>
            <fullName>PTS system mannose-specific EIIA component</fullName>
        </alternativeName>
    </domain>
</protein>
<gene>
    <name type="primary">manP</name>
    <name type="synonym">yjdD</name>
    <name type="ordered locus">BSU12010</name>
</gene>
<name>PTN3B_BACSU</name>
<sequence>MKLLAITSCPNGIAHTYMAAENLQKAADRLGVSIKVETQGGIGVENKLTEEEIREADAIIIAADRSVNKDRFIGKKLLSVGVQDGIRKPEELIQKALNGDIPVYRSATKSESGNHQEKKQNPIYRHLMNGVSFMVPFIVVGGLLIAVALTLGGEKTPKGLVIPDDSFWKTIEQIGSASFSFMIPILAGYIAYSIADKPGLVPGMIGGYIAATGSFYDSASGAGFLGGIIAGFLAGYAALWIKKLKVPKAIQPIMPIIIIPVFASLIVGLAFVFLIGAPVAQIFASLTVWLAGMKGSSSILLALILGAMISFDMGGPVNKVAFLFGSAMIGEGNYEIMGPIAVAICIPPIGLGIATFLGKRKFEASQREMGKAAFTMGLFGITEGAIPFAAQDPLRVIPSIMAGSMTGSVIAMIGNVGDRVAHGGPIVAVLGAVDHVLMFFIAVIAGSLVTALFVNVLKKDITASPVLSETAPTSAPSEAAAANEIKQPIQSQKAEMSEFKKLTDIISPELIEPNLSGETSDDIIDELIQKLSRRGALLSESGFKQAILNREQQGTTAIGMNIAIPHGKSEAVREPSVAFGIKRSGVDWNSLDGSEAKLIFMIAVPKESGGNQHLKILQMLSRKLMDDNYRERLLSVQTTEEAYKLLEEIE</sequence>
<keyword id="KW-0002">3D-structure</keyword>
<keyword id="KW-1003">Cell membrane</keyword>
<keyword id="KW-0418">Kinase</keyword>
<keyword id="KW-0472">Membrane</keyword>
<keyword id="KW-0597">Phosphoprotein</keyword>
<keyword id="KW-0598">Phosphotransferase system</keyword>
<keyword id="KW-1185">Reference proteome</keyword>
<keyword id="KW-0762">Sugar transport</keyword>
<keyword id="KW-0808">Transferase</keyword>
<keyword id="KW-0812">Transmembrane</keyword>
<keyword id="KW-1133">Transmembrane helix</keyword>
<keyword id="KW-0813">Transport</keyword>
<comment type="function">
    <text>The phosphoenolpyruvate-dependent sugar phosphotransferase system (sugar PTS), a major carbohydrate active -transport system, catalyzes the phosphorylation of incoming sugar substrates concomitantly with their translocation across the cell membrane. This system is involved in mannose transport.</text>
</comment>
<comment type="catalytic activity">
    <reaction>
        <text>D-mannose(out) + N(pros)-phospho-L-histidyl-[protein] = D-mannose 6-phosphate(in) + L-histidyl-[protein]</text>
        <dbReference type="Rhea" id="RHEA:49232"/>
        <dbReference type="Rhea" id="RHEA-COMP:9745"/>
        <dbReference type="Rhea" id="RHEA-COMP:9746"/>
        <dbReference type="ChEBI" id="CHEBI:4208"/>
        <dbReference type="ChEBI" id="CHEBI:29979"/>
        <dbReference type="ChEBI" id="CHEBI:58735"/>
        <dbReference type="ChEBI" id="CHEBI:64837"/>
        <dbReference type="EC" id="2.7.1.191"/>
    </reaction>
</comment>
<comment type="subcellular location">
    <subcellularLocation>
        <location evidence="4">Cell membrane</location>
        <topology evidence="4">Multi-pass membrane protein</topology>
    </subcellularLocation>
</comment>
<comment type="induction">
    <text evidence="7">Up-regulated by mannose. Is under the control of ManR. Is subject to carbon catabolite repression (CCR) by glucose. Forms part of an operon with manA and yjdF.</text>
</comment>
<comment type="domain">
    <text evidence="3 7">The EIIB domain is phosphorylated by phospho-EIIA on a cysteinyl or histidyl residue, depending on the transported sugar. Then, it transfers the phosphoryl group to the sugar substrate concomitantly with the sugar uptake processed by the EIIC domain. The EIIB domain is also able to transfer its phosphoryl group to a specific histidine residue in ManR, which leads to its inactivation.</text>
</comment>
<comment type="domain">
    <text evidence="4 7">The EIIC domain forms the PTS system translocation channel and contains the specific substrate-binding site.</text>
</comment>
<comment type="domain">
    <text evidence="2 7">The EIIA domain is phosphorylated by phospho-HPr on a histidyl residue. Then, it transfers the phosphoryl group to the EIIB domain.</text>
</comment>
<comment type="disruption phenotype">
    <text evidence="5 7">Cells lacking this gene are unable to grow with mannose as the sole carbon source. Deletion of manP results in constitutive expression from both the manP and manR promoters, indicating that the phosphotransferase system (PTS) component EII-Man has a negative effect on regulation of the mannose operon and manR.</text>
</comment>
<proteinExistence type="evidence at protein level"/>
<reference key="1">
    <citation type="journal article" date="1997" name="Nature">
        <title>The complete genome sequence of the Gram-positive bacterium Bacillus subtilis.</title>
        <authorList>
            <person name="Kunst F."/>
            <person name="Ogasawara N."/>
            <person name="Moszer I."/>
            <person name="Albertini A.M."/>
            <person name="Alloni G."/>
            <person name="Azevedo V."/>
            <person name="Bertero M.G."/>
            <person name="Bessieres P."/>
            <person name="Bolotin A."/>
            <person name="Borchert S."/>
            <person name="Borriss R."/>
            <person name="Boursier L."/>
            <person name="Brans A."/>
            <person name="Braun M."/>
            <person name="Brignell S.C."/>
            <person name="Bron S."/>
            <person name="Brouillet S."/>
            <person name="Bruschi C.V."/>
            <person name="Caldwell B."/>
            <person name="Capuano V."/>
            <person name="Carter N.M."/>
            <person name="Choi S.-K."/>
            <person name="Codani J.-J."/>
            <person name="Connerton I.F."/>
            <person name="Cummings N.J."/>
            <person name="Daniel R.A."/>
            <person name="Denizot F."/>
            <person name="Devine K.M."/>
            <person name="Duesterhoeft A."/>
            <person name="Ehrlich S.D."/>
            <person name="Emmerson P.T."/>
            <person name="Entian K.-D."/>
            <person name="Errington J."/>
            <person name="Fabret C."/>
            <person name="Ferrari E."/>
            <person name="Foulger D."/>
            <person name="Fritz C."/>
            <person name="Fujita M."/>
            <person name="Fujita Y."/>
            <person name="Fuma S."/>
            <person name="Galizzi A."/>
            <person name="Galleron N."/>
            <person name="Ghim S.-Y."/>
            <person name="Glaser P."/>
            <person name="Goffeau A."/>
            <person name="Golightly E.J."/>
            <person name="Grandi G."/>
            <person name="Guiseppi G."/>
            <person name="Guy B.J."/>
            <person name="Haga K."/>
            <person name="Haiech J."/>
            <person name="Harwood C.R."/>
            <person name="Henaut A."/>
            <person name="Hilbert H."/>
            <person name="Holsappel S."/>
            <person name="Hosono S."/>
            <person name="Hullo M.-F."/>
            <person name="Itaya M."/>
            <person name="Jones L.-M."/>
            <person name="Joris B."/>
            <person name="Karamata D."/>
            <person name="Kasahara Y."/>
            <person name="Klaerr-Blanchard M."/>
            <person name="Klein C."/>
            <person name="Kobayashi Y."/>
            <person name="Koetter P."/>
            <person name="Koningstein G."/>
            <person name="Krogh S."/>
            <person name="Kumano M."/>
            <person name="Kurita K."/>
            <person name="Lapidus A."/>
            <person name="Lardinois S."/>
            <person name="Lauber J."/>
            <person name="Lazarevic V."/>
            <person name="Lee S.-M."/>
            <person name="Levine A."/>
            <person name="Liu H."/>
            <person name="Masuda S."/>
            <person name="Mauel C."/>
            <person name="Medigue C."/>
            <person name="Medina N."/>
            <person name="Mellado R.P."/>
            <person name="Mizuno M."/>
            <person name="Moestl D."/>
            <person name="Nakai S."/>
            <person name="Noback M."/>
            <person name="Noone D."/>
            <person name="O'Reilly M."/>
            <person name="Ogawa K."/>
            <person name="Ogiwara A."/>
            <person name="Oudega B."/>
            <person name="Park S.-H."/>
            <person name="Parro V."/>
            <person name="Pohl T.M."/>
            <person name="Portetelle D."/>
            <person name="Porwollik S."/>
            <person name="Prescott A.M."/>
            <person name="Presecan E."/>
            <person name="Pujic P."/>
            <person name="Purnelle B."/>
            <person name="Rapoport G."/>
            <person name="Rey M."/>
            <person name="Reynolds S."/>
            <person name="Rieger M."/>
            <person name="Rivolta C."/>
            <person name="Rocha E."/>
            <person name="Roche B."/>
            <person name="Rose M."/>
            <person name="Sadaie Y."/>
            <person name="Sato T."/>
            <person name="Scanlan E."/>
            <person name="Schleich S."/>
            <person name="Schroeter R."/>
            <person name="Scoffone F."/>
            <person name="Sekiguchi J."/>
            <person name="Sekowska A."/>
            <person name="Seror S.J."/>
            <person name="Serror P."/>
            <person name="Shin B.-S."/>
            <person name="Soldo B."/>
            <person name="Sorokin A."/>
            <person name="Tacconi E."/>
            <person name="Takagi T."/>
            <person name="Takahashi H."/>
            <person name="Takemaru K."/>
            <person name="Takeuchi M."/>
            <person name="Tamakoshi A."/>
            <person name="Tanaka T."/>
            <person name="Terpstra P."/>
            <person name="Tognoni A."/>
            <person name="Tosato V."/>
            <person name="Uchiyama S."/>
            <person name="Vandenbol M."/>
            <person name="Vannier F."/>
            <person name="Vassarotti A."/>
            <person name="Viari A."/>
            <person name="Wambutt R."/>
            <person name="Wedler E."/>
            <person name="Wedler H."/>
            <person name="Weitzenegger T."/>
            <person name="Winters P."/>
            <person name="Wipat A."/>
            <person name="Yamamoto H."/>
            <person name="Yamane K."/>
            <person name="Yasumoto K."/>
            <person name="Yata K."/>
            <person name="Yoshida K."/>
            <person name="Yoshikawa H.-F."/>
            <person name="Zumstein E."/>
            <person name="Yoshikawa H."/>
            <person name="Danchin A."/>
        </authorList>
    </citation>
    <scope>NUCLEOTIDE SEQUENCE [LARGE SCALE GENOMIC DNA]</scope>
    <source>
        <strain>168</strain>
    </source>
</reference>
<reference key="2">
    <citation type="journal article" date="2009" name="Microbiology">
        <title>From a consortium sequence to a unified sequence: the Bacillus subtilis 168 reference genome a decade later.</title>
        <authorList>
            <person name="Barbe V."/>
            <person name="Cruveiller S."/>
            <person name="Kunst F."/>
            <person name="Lenoble P."/>
            <person name="Meurice G."/>
            <person name="Sekowska A."/>
            <person name="Vallenet D."/>
            <person name="Wang T."/>
            <person name="Moszer I."/>
            <person name="Medigue C."/>
            <person name="Danchin A."/>
        </authorList>
    </citation>
    <scope>SEQUENCE REVISION TO C-TERMINUS</scope>
</reference>
<reference key="3">
    <citation type="journal article" date="1999" name="Microbiology">
        <title>Novel phosphotransferase system genes revealed by genome analysis - the complete complement of PTS proteins encoded within the genome of Bacillus subtilis.</title>
        <authorList>
            <person name="Reizer J."/>
            <person name="Bachem S."/>
            <person name="Reizer A."/>
            <person name="Arnaud M."/>
            <person name="Saier M.H. Jr."/>
            <person name="Stuelke J."/>
        </authorList>
    </citation>
    <scope>GENE NAME</scope>
    <source>
        <strain>168</strain>
    </source>
</reference>
<reference key="4">
    <citation type="journal article" date="2000" name="J. Bacteriol.">
        <title>Mutations in multidrug efflux homologs, sugar isomerases, and antimicrobial biosynthesis genes differentially elevate activity of the sigma(X) and sigma(W) factors in Bacillus subtilis.</title>
        <authorList>
            <person name="Turner M.S."/>
            <person name="Helmann J.D."/>
        </authorList>
    </citation>
    <scope>DISRUPTION PHENOTYPE</scope>
    <source>
        <strain>168</strain>
    </source>
</reference>
<reference key="5">
    <citation type="journal article" date="2007" name="Mol. Cell. Proteomics">
        <title>The serine/threonine/tyrosine phosphoproteome of the model bacterium Bacillus subtilis.</title>
        <authorList>
            <person name="Macek B."/>
            <person name="Mijakovic I."/>
            <person name="Olsen J.V."/>
            <person name="Gnad F."/>
            <person name="Kumar C."/>
            <person name="Jensen P.R."/>
            <person name="Mann M."/>
        </authorList>
    </citation>
    <scope>PHOSPHORYLATION [LARGE SCALE ANALYSIS] AT SER-365</scope>
    <scope>IDENTIFICATION BY MASS SPECTROMETRY</scope>
    <source>
        <strain>168</strain>
    </source>
</reference>
<reference key="6">
    <citation type="journal article" date="2010" name="J. Bacteriol.">
        <title>Characterization of a mannose utilization system in Bacillus subtilis.</title>
        <authorList>
            <person name="Sun T."/>
            <person name="Altenbuchner J."/>
        </authorList>
    </citation>
    <scope>INDUCTION</scope>
    <scope>DISRUPTION PHENOTYPE</scope>
    <scope>DOMAIN</scope>
    <scope>MUTAGENESIS OF CYS-9</scope>
</reference>
<reference key="7">
    <citation type="submission" date="2007-09" db="PDB data bank">
        <title>Crystal structure of the fructose specific IIb subunit of PTS system from Bacillus subtilis subsp. subtilis str. 168.</title>
        <authorList>
            <consortium name="Midwest center for structural genomics (MCSG)"/>
        </authorList>
    </citation>
    <scope>X-RAY CRYSTALLOGRAPHY (1.8 ANGSTROMS) OF 1-104</scope>
</reference>